<organism>
    <name type="scientific">Planobispora rosea</name>
    <dbReference type="NCBI Taxonomy" id="35762"/>
    <lineage>
        <taxon>Bacteria</taxon>
        <taxon>Bacillati</taxon>
        <taxon>Actinomycetota</taxon>
        <taxon>Actinomycetes</taxon>
        <taxon>Streptosporangiales</taxon>
        <taxon>Streptosporangiaceae</taxon>
        <taxon>Planobispora</taxon>
    </lineage>
</organism>
<sequence length="128" mass="14110">LQDGAYHEVDSSEMAFKIAGSMAFKEAARKAYAVILEPLMAVEVTTPEDYMGDVIGDLKGPRRQIRAMDERAGARVVQALVTLLDIFGYVGDLRSKTQGRASFSMQFDSYAEVPQHIAKKIVAKVRAQ</sequence>
<feature type="chain" id="PRO_0000091178" description="Elongation factor G">
    <location>
        <begin position="1" status="less than"/>
        <end position="128"/>
    </location>
</feature>
<feature type="non-terminal residue">
    <location>
        <position position="1"/>
    </location>
</feature>
<keyword id="KW-0963">Cytoplasm</keyword>
<keyword id="KW-0251">Elongation factor</keyword>
<keyword id="KW-0342">GTP-binding</keyword>
<keyword id="KW-0547">Nucleotide-binding</keyword>
<keyword id="KW-0648">Protein biosynthesis</keyword>
<gene>
    <name type="primary">fusA</name>
    <name type="synonym">fus</name>
</gene>
<proteinExistence type="inferred from homology"/>
<dbReference type="EMBL" id="X98830">
    <property type="protein sequence ID" value="CAA67344.1"/>
    <property type="molecule type" value="Genomic_DNA"/>
</dbReference>
<dbReference type="PIR" id="S72628">
    <property type="entry name" value="S72628"/>
</dbReference>
<dbReference type="SMR" id="P72230"/>
<dbReference type="GO" id="GO:0005737">
    <property type="term" value="C:cytoplasm"/>
    <property type="evidence" value="ECO:0007669"/>
    <property type="project" value="UniProtKB-SubCell"/>
</dbReference>
<dbReference type="GO" id="GO:0005525">
    <property type="term" value="F:GTP binding"/>
    <property type="evidence" value="ECO:0007669"/>
    <property type="project" value="UniProtKB-KW"/>
</dbReference>
<dbReference type="GO" id="GO:0003746">
    <property type="term" value="F:translation elongation factor activity"/>
    <property type="evidence" value="ECO:0007669"/>
    <property type="project" value="UniProtKB-KW"/>
</dbReference>
<dbReference type="GO" id="GO:0032790">
    <property type="term" value="P:ribosome disassembly"/>
    <property type="evidence" value="ECO:0007669"/>
    <property type="project" value="TreeGrafter"/>
</dbReference>
<dbReference type="CDD" id="cd03713">
    <property type="entry name" value="EFG_mtEFG_C"/>
    <property type="match status" value="1"/>
</dbReference>
<dbReference type="FunFam" id="3.30.70.240:FF:000001">
    <property type="entry name" value="Elongation factor G"/>
    <property type="match status" value="1"/>
</dbReference>
<dbReference type="Gene3D" id="3.30.230.10">
    <property type="match status" value="1"/>
</dbReference>
<dbReference type="Gene3D" id="3.30.70.240">
    <property type="match status" value="1"/>
</dbReference>
<dbReference type="InterPro" id="IPR035647">
    <property type="entry name" value="EFG_III/V"/>
</dbReference>
<dbReference type="InterPro" id="IPR035649">
    <property type="entry name" value="EFG_V"/>
</dbReference>
<dbReference type="InterPro" id="IPR000640">
    <property type="entry name" value="EFG_V-like"/>
</dbReference>
<dbReference type="InterPro" id="IPR020568">
    <property type="entry name" value="Ribosomal_Su5_D2-typ_SF"/>
</dbReference>
<dbReference type="InterPro" id="IPR014721">
    <property type="entry name" value="Ribsml_uS5_D2-typ_fold_subgr"/>
</dbReference>
<dbReference type="InterPro" id="IPR005517">
    <property type="entry name" value="Transl_elong_EFG/EF2_IV"/>
</dbReference>
<dbReference type="PANTHER" id="PTHR43261:SF1">
    <property type="entry name" value="RIBOSOME-RELEASING FACTOR 2, MITOCHONDRIAL"/>
    <property type="match status" value="1"/>
</dbReference>
<dbReference type="PANTHER" id="PTHR43261">
    <property type="entry name" value="TRANSLATION ELONGATION FACTOR G-RELATED"/>
    <property type="match status" value="1"/>
</dbReference>
<dbReference type="Pfam" id="PF00679">
    <property type="entry name" value="EFG_C"/>
    <property type="match status" value="1"/>
</dbReference>
<dbReference type="Pfam" id="PF03764">
    <property type="entry name" value="EFG_IV"/>
    <property type="match status" value="1"/>
</dbReference>
<dbReference type="SMART" id="SM00838">
    <property type="entry name" value="EFG_C"/>
    <property type="match status" value="1"/>
</dbReference>
<dbReference type="SUPFAM" id="SSF54980">
    <property type="entry name" value="EF-G C-terminal domain-like"/>
    <property type="match status" value="1"/>
</dbReference>
<dbReference type="SUPFAM" id="SSF54211">
    <property type="entry name" value="Ribosomal protein S5 domain 2-like"/>
    <property type="match status" value="1"/>
</dbReference>
<protein>
    <recommendedName>
        <fullName>Elongation factor G</fullName>
        <shortName>EF-G</shortName>
    </recommendedName>
</protein>
<evidence type="ECO:0000250" key="1"/>
<evidence type="ECO:0000305" key="2"/>
<accession>P72230</accession>
<name>EFG_PLARO</name>
<reference key="1">
    <citation type="journal article" date="1996" name="Mol. Microbiol.">
        <title>An elongation factor Tu (EF-Tu) resistant to the EF-Tu inhibitor GE2270 in the producing organism Planobispora rosea.</title>
        <authorList>
            <person name="Sosio M."/>
            <person name="Amati G."/>
            <person name="Cappellano C."/>
            <person name="Sarubbi E."/>
            <person name="Monti F."/>
            <person name="Donadio S."/>
        </authorList>
    </citation>
    <scope>NUCLEOTIDE SEQUENCE [GENOMIC DNA]</scope>
    <source>
        <strain>ATCC 53773 / GE2270</strain>
    </source>
</reference>
<comment type="function">
    <text evidence="1">Catalyzes the GTP-dependent ribosomal translocation step during translation elongation. During this step, the ribosome changes from the pre-translocational (PRE) to the post-translocational (POST) state as the newly formed A-site-bound peptidyl-tRNA and P-site-bound deacylated tRNA move to the P and E sites, respectively. Catalyzes the coordinated movement of the two tRNA molecules, the mRNA and conformational changes in the ribosome (By similarity).</text>
</comment>
<comment type="subcellular location">
    <subcellularLocation>
        <location evidence="1">Cytoplasm</location>
    </subcellularLocation>
</comment>
<comment type="similarity">
    <text evidence="2">Belongs to the GTP-binding elongation factor family. EF-G/EF-2 subfamily.</text>
</comment>